<keyword id="KW-0002">3D-structure</keyword>
<keyword id="KW-0342">GTP-binding</keyword>
<keyword id="KW-0547">Nucleotide-binding</keyword>
<keyword id="KW-0539">Nucleus</keyword>
<keyword id="KW-0653">Protein transport</keyword>
<keyword id="KW-1185">Reference proteome</keyword>
<keyword id="KW-0690">Ribosome biogenesis</keyword>
<keyword id="KW-0694">RNA-binding</keyword>
<keyword id="KW-0698">rRNA processing</keyword>
<keyword id="KW-0813">Transport</keyword>
<gene>
    <name evidence="9" type="primary">grn1</name>
    <name type="ORF">SPBC26H8.08c</name>
</gene>
<proteinExistence type="evidence at protein level"/>
<reference evidence="9" key="1">
    <citation type="journal article" date="2002" name="Nature">
        <title>The genome sequence of Schizosaccharomyces pombe.</title>
        <authorList>
            <person name="Wood V."/>
            <person name="Gwilliam R."/>
            <person name="Rajandream M.A."/>
            <person name="Lyne M.H."/>
            <person name="Lyne R."/>
            <person name="Stewart A."/>
            <person name="Sgouros J.G."/>
            <person name="Peat N."/>
            <person name="Hayles J."/>
            <person name="Baker S.G."/>
            <person name="Basham D."/>
            <person name="Bowman S."/>
            <person name="Brooks K."/>
            <person name="Brown D."/>
            <person name="Brown S."/>
            <person name="Chillingworth T."/>
            <person name="Churcher C.M."/>
            <person name="Collins M."/>
            <person name="Connor R."/>
            <person name="Cronin A."/>
            <person name="Davis P."/>
            <person name="Feltwell T."/>
            <person name="Fraser A."/>
            <person name="Gentles S."/>
            <person name="Goble A."/>
            <person name="Hamlin N."/>
            <person name="Harris D.E."/>
            <person name="Hidalgo J."/>
            <person name="Hodgson G."/>
            <person name="Holroyd S."/>
            <person name="Hornsby T."/>
            <person name="Howarth S."/>
            <person name="Huckle E.J."/>
            <person name="Hunt S."/>
            <person name="Jagels K."/>
            <person name="James K.D."/>
            <person name="Jones L."/>
            <person name="Jones M."/>
            <person name="Leather S."/>
            <person name="McDonald S."/>
            <person name="McLean J."/>
            <person name="Mooney P."/>
            <person name="Moule S."/>
            <person name="Mungall K.L."/>
            <person name="Murphy L.D."/>
            <person name="Niblett D."/>
            <person name="Odell C."/>
            <person name="Oliver K."/>
            <person name="O'Neil S."/>
            <person name="Pearson D."/>
            <person name="Quail M.A."/>
            <person name="Rabbinowitsch E."/>
            <person name="Rutherford K.M."/>
            <person name="Rutter S."/>
            <person name="Saunders D."/>
            <person name="Seeger K."/>
            <person name="Sharp S."/>
            <person name="Skelton J."/>
            <person name="Simmonds M.N."/>
            <person name="Squares R."/>
            <person name="Squares S."/>
            <person name="Stevens K."/>
            <person name="Taylor K."/>
            <person name="Taylor R.G."/>
            <person name="Tivey A."/>
            <person name="Walsh S.V."/>
            <person name="Warren T."/>
            <person name="Whitehead S."/>
            <person name="Woodward J.R."/>
            <person name="Volckaert G."/>
            <person name="Aert R."/>
            <person name="Robben J."/>
            <person name="Grymonprez B."/>
            <person name="Weltjens I."/>
            <person name="Vanstreels E."/>
            <person name="Rieger M."/>
            <person name="Schaefer M."/>
            <person name="Mueller-Auer S."/>
            <person name="Gabel C."/>
            <person name="Fuchs M."/>
            <person name="Duesterhoeft A."/>
            <person name="Fritzc C."/>
            <person name="Holzer E."/>
            <person name="Moestl D."/>
            <person name="Hilbert H."/>
            <person name="Borzym K."/>
            <person name="Langer I."/>
            <person name="Beck A."/>
            <person name="Lehrach H."/>
            <person name="Reinhardt R."/>
            <person name="Pohl T.M."/>
            <person name="Eger P."/>
            <person name="Zimmermann W."/>
            <person name="Wedler H."/>
            <person name="Wambutt R."/>
            <person name="Purnelle B."/>
            <person name="Goffeau A."/>
            <person name="Cadieu E."/>
            <person name="Dreano S."/>
            <person name="Gloux S."/>
            <person name="Lelaure V."/>
            <person name="Mottier S."/>
            <person name="Galibert F."/>
            <person name="Aves S.J."/>
            <person name="Xiang Z."/>
            <person name="Hunt C."/>
            <person name="Moore K."/>
            <person name="Hurst S.M."/>
            <person name="Lucas M."/>
            <person name="Rochet M."/>
            <person name="Gaillardin C."/>
            <person name="Tallada V.A."/>
            <person name="Garzon A."/>
            <person name="Thode G."/>
            <person name="Daga R.R."/>
            <person name="Cruzado L."/>
            <person name="Jimenez J."/>
            <person name="Sanchez M."/>
            <person name="del Rey F."/>
            <person name="Benito J."/>
            <person name="Dominguez A."/>
            <person name="Revuelta J.L."/>
            <person name="Moreno S."/>
            <person name="Armstrong J."/>
            <person name="Forsburg S.L."/>
            <person name="Cerutti L."/>
            <person name="Lowe T."/>
            <person name="McCombie W.R."/>
            <person name="Paulsen I."/>
            <person name="Potashkin J."/>
            <person name="Shpakovski G.V."/>
            <person name="Ussery D."/>
            <person name="Barrell B.G."/>
            <person name="Nurse P."/>
        </authorList>
    </citation>
    <scope>NUCLEOTIDE SEQUENCE [LARGE SCALE GENOMIC DNA]</scope>
    <source>
        <strain>972 / ATCC 24843</strain>
    </source>
</reference>
<reference evidence="8" key="2">
    <citation type="journal article" date="2006" name="Mol. Biol. Cell">
        <title>The homologous putative GTPases Grn1p from fission yeast and the human GNL3L are required for growth and play a role in processing of nucleolar pre-rRNA.</title>
        <authorList>
            <person name="Du X."/>
            <person name="Rao M.R.K.S."/>
            <person name="Chen X.Q."/>
            <person name="Wu W."/>
            <person name="Mahalingam S."/>
            <person name="Balasundaram D."/>
        </authorList>
    </citation>
    <scope>FUNCTION</scope>
    <scope>SUBCELLULAR LOCATION</scope>
    <scope>MUTAGENESIS OF 6-LYS--LYS-22; 6-LYS--LYS-36; 60-ILE--GLU-90; 164-ASP--PRO-175; 195-LYS--PRO-208; 276-GLY--SER-283; 326-ASP--GLY-329 AND 405-ALA--GLY-415</scope>
    <scope>DISRUPTION PHENOTYPE</scope>
</reference>
<reference evidence="8" key="3">
    <citation type="journal article" date="2006" name="Nat. Biotechnol.">
        <title>ORFeome cloning and global analysis of protein localization in the fission yeast Schizosaccharomyces pombe.</title>
        <authorList>
            <person name="Matsuyama A."/>
            <person name="Arai R."/>
            <person name="Yashiroda Y."/>
            <person name="Shirai A."/>
            <person name="Kamata A."/>
            <person name="Sekido S."/>
            <person name="Kobayashi Y."/>
            <person name="Hashimoto A."/>
            <person name="Hamamoto M."/>
            <person name="Hiraoka Y."/>
            <person name="Horinouchi S."/>
            <person name="Yoshida M."/>
        </authorList>
    </citation>
    <scope>SUBCELLULAR LOCATION [LARGE SCALE ANALYSIS]</scope>
</reference>
<feature type="chain" id="PRO_0000348611" description="GTPase grn1">
    <location>
        <begin position="1"/>
        <end position="470"/>
    </location>
</feature>
<feature type="domain" description="CP-type G" evidence="3">
    <location>
        <begin position="153"/>
        <end position="333"/>
    </location>
</feature>
<feature type="region of interest" description="Disordered" evidence="4">
    <location>
        <begin position="1"/>
        <end position="56"/>
    </location>
</feature>
<feature type="region of interest" description="RNA-binding" evidence="2 7">
    <location>
        <begin position="405"/>
        <end position="415"/>
    </location>
</feature>
<feature type="compositionally biased region" description="Basic residues" evidence="4">
    <location>
        <begin position="1"/>
        <end position="16"/>
    </location>
</feature>
<feature type="compositionally biased region" description="Basic and acidic residues" evidence="4">
    <location>
        <begin position="17"/>
        <end position="27"/>
    </location>
</feature>
<feature type="binding site" evidence="1 2">
    <location>
        <begin position="202"/>
        <end position="205"/>
    </location>
    <ligand>
        <name>GTP</name>
        <dbReference type="ChEBI" id="CHEBI:37565"/>
    </ligand>
</feature>
<feature type="binding site" evidence="1 2">
    <location>
        <begin position="276"/>
        <end position="283"/>
    </location>
    <ligand>
        <name>GTP</name>
        <dbReference type="ChEBI" id="CHEBI:37565"/>
    </ligand>
</feature>
<feature type="binding site" evidence="1 2">
    <location>
        <begin position="326"/>
        <end position="329"/>
    </location>
    <ligand>
        <name>GTP</name>
        <dbReference type="ChEBI" id="CHEBI:37565"/>
    </ligand>
</feature>
<feature type="mutagenesis site" description="Fails to localize to the nucleolus." evidence="5">
    <location>
        <begin position="6"/>
        <end position="36"/>
    </location>
</feature>
<feature type="mutagenesis site" description="Fails to localize to the nucleolus." evidence="5">
    <location>
        <begin position="6"/>
        <end position="22"/>
    </location>
</feature>
<feature type="mutagenesis site" description="Fully complements the null mutant. No growth defect. Normal protein level." evidence="5">
    <location>
        <begin position="60"/>
        <end position="90"/>
    </location>
</feature>
<feature type="mutagenesis site" description="Null phenotype. Nuclear/nucleolar border localization consistent with the lack of nucleolar export of pre-ribosomes accompanied by a distortion of nucleolar structure. Extremely low protein level." evidence="5">
    <location>
        <begin position="164"/>
        <end position="175"/>
    </location>
</feature>
<feature type="mutagenesis site" description="Null phenotype. Nuclear/nucleolar border localization consistent with the lack of nucleolar export of pre-ribosomes accompanied by a distortion of nucleolar structure. Extremely low protein level." evidence="5">
    <location>
        <begin position="195"/>
        <end position="208"/>
    </location>
</feature>
<feature type="mutagenesis site" description="Null phenotype. Nuclear/nucleolar border localization consistent with the lack of nucleolar export of pre-ribosomes accompanied by a distortion of nucleolar structure. Extremely low protein level." evidence="5">
    <location>
        <begin position="276"/>
        <end position="283"/>
    </location>
</feature>
<feature type="mutagenesis site" description="Null phenotype. Nuclear/nucleolar border localization consistent with the lack of nucleolar export of pre-ribosomes accompanied by a distortion of nucleolar structure. Extremely low protein level." evidence="5">
    <location>
        <begin position="326"/>
        <end position="329"/>
    </location>
</feature>
<feature type="mutagenesis site" description="Null phenotype. Nuclear/nucleolar border localization consistent with the lack of nucleolar export of pre-ribosomes accompanied by a distortion of nucleolar structure. Extremely low protein level." evidence="5">
    <location>
        <begin position="405"/>
        <end position="415"/>
    </location>
</feature>
<feature type="strand" evidence="11">
    <location>
        <begin position="5"/>
        <end position="7"/>
    </location>
</feature>
<feature type="helix" evidence="10">
    <location>
        <begin position="13"/>
        <end position="30"/>
    </location>
</feature>
<accession>O74791</accession>
<dbReference type="EMBL" id="CU329671">
    <property type="protein sequence ID" value="CAA21100.1"/>
    <property type="molecule type" value="Genomic_DNA"/>
</dbReference>
<dbReference type="PIR" id="T40020">
    <property type="entry name" value="T40020"/>
</dbReference>
<dbReference type="RefSeq" id="NP_596651.1">
    <property type="nucleotide sequence ID" value="NM_001022573.2"/>
</dbReference>
<dbReference type="PDB" id="8ESQ">
    <property type="method" value="EM"/>
    <property type="resolution" value="2.80 A"/>
    <property type="chains" value="s=1-470"/>
</dbReference>
<dbReference type="PDB" id="8ESR">
    <property type="method" value="EM"/>
    <property type="resolution" value="3.20 A"/>
    <property type="chains" value="s=1-470"/>
</dbReference>
<dbReference type="PDB" id="8ETC">
    <property type="method" value="EM"/>
    <property type="resolution" value="3.10 A"/>
    <property type="chains" value="s=1-470"/>
</dbReference>
<dbReference type="PDB" id="8ETJ">
    <property type="method" value="EM"/>
    <property type="resolution" value="3.20 A"/>
    <property type="chains" value="s=1-470"/>
</dbReference>
<dbReference type="PDBsum" id="8ESQ"/>
<dbReference type="PDBsum" id="8ESR"/>
<dbReference type="PDBsum" id="8ETC"/>
<dbReference type="PDBsum" id="8ETJ"/>
<dbReference type="SMR" id="O74791"/>
<dbReference type="BioGRID" id="276997">
    <property type="interactions" value="11"/>
</dbReference>
<dbReference type="FunCoup" id="O74791">
    <property type="interactions" value="470"/>
</dbReference>
<dbReference type="STRING" id="284812.O74791"/>
<dbReference type="iPTMnet" id="O74791"/>
<dbReference type="PaxDb" id="4896-SPBC26H8.08c.1"/>
<dbReference type="EnsemblFungi" id="SPBC26H8.08c.1">
    <property type="protein sequence ID" value="SPBC26H8.08c.1:pep"/>
    <property type="gene ID" value="SPBC26H8.08c"/>
</dbReference>
<dbReference type="GeneID" id="2540469"/>
<dbReference type="KEGG" id="spo:2540469"/>
<dbReference type="PomBase" id="SPBC26H8.08c">
    <property type="gene designation" value="grn1"/>
</dbReference>
<dbReference type="VEuPathDB" id="FungiDB:SPBC26H8.08c"/>
<dbReference type="eggNOG" id="KOG2484">
    <property type="taxonomic scope" value="Eukaryota"/>
</dbReference>
<dbReference type="HOGENOM" id="CLU_011106_5_5_1"/>
<dbReference type="InParanoid" id="O74791"/>
<dbReference type="OMA" id="FKLDGLW"/>
<dbReference type="PhylomeDB" id="O74791"/>
<dbReference type="Reactome" id="R-SPO-6791226">
    <property type="pathway name" value="Major pathway of rRNA processing in the nucleolus and cytosol"/>
</dbReference>
<dbReference type="PRO" id="PR:O74791"/>
<dbReference type="Proteomes" id="UP000002485">
    <property type="component" value="Chromosome II"/>
</dbReference>
<dbReference type="GO" id="GO:0005730">
    <property type="term" value="C:nucleolus"/>
    <property type="evidence" value="ECO:0000314"/>
    <property type="project" value="PomBase"/>
</dbReference>
<dbReference type="GO" id="GO:0005634">
    <property type="term" value="C:nucleus"/>
    <property type="evidence" value="ECO:0007005"/>
    <property type="project" value="PomBase"/>
</dbReference>
<dbReference type="GO" id="GO:0030684">
    <property type="term" value="C:preribosome"/>
    <property type="evidence" value="ECO:0000314"/>
    <property type="project" value="PomBase"/>
</dbReference>
<dbReference type="GO" id="GO:0005525">
    <property type="term" value="F:GTP binding"/>
    <property type="evidence" value="ECO:0000304"/>
    <property type="project" value="PomBase"/>
</dbReference>
<dbReference type="GO" id="GO:0003924">
    <property type="term" value="F:GTPase activity"/>
    <property type="evidence" value="ECO:0000255"/>
    <property type="project" value="PomBase"/>
</dbReference>
<dbReference type="GO" id="GO:0003723">
    <property type="term" value="F:RNA binding"/>
    <property type="evidence" value="ECO:0007669"/>
    <property type="project" value="UniProtKB-KW"/>
</dbReference>
<dbReference type="GO" id="GO:1902626">
    <property type="term" value="P:assembly of large subunit precursor of preribosome"/>
    <property type="evidence" value="ECO:0000269"/>
    <property type="project" value="PomBase"/>
</dbReference>
<dbReference type="GO" id="GO:0015031">
    <property type="term" value="P:protein transport"/>
    <property type="evidence" value="ECO:0007669"/>
    <property type="project" value="UniProtKB-KW"/>
</dbReference>
<dbReference type="GO" id="GO:0006364">
    <property type="term" value="P:rRNA processing"/>
    <property type="evidence" value="ECO:0000315"/>
    <property type="project" value="PomBase"/>
</dbReference>
<dbReference type="CDD" id="cd04178">
    <property type="entry name" value="Nucleostemin_like"/>
    <property type="match status" value="1"/>
</dbReference>
<dbReference type="FunFam" id="1.10.1580.10:FF:000006">
    <property type="entry name" value="Nuclear GTP-binding protein NUG1"/>
    <property type="match status" value="1"/>
</dbReference>
<dbReference type="Gene3D" id="1.10.1580.10">
    <property type="match status" value="1"/>
</dbReference>
<dbReference type="Gene3D" id="3.40.50.300">
    <property type="entry name" value="P-loop containing nucleotide triphosphate hydrolases"/>
    <property type="match status" value="1"/>
</dbReference>
<dbReference type="InterPro" id="IPR030378">
    <property type="entry name" value="G_CP_dom"/>
</dbReference>
<dbReference type="InterPro" id="IPR014813">
    <property type="entry name" value="Gnl3_N_dom"/>
</dbReference>
<dbReference type="InterPro" id="IPR006073">
    <property type="entry name" value="GTP-bd"/>
</dbReference>
<dbReference type="InterPro" id="IPR023179">
    <property type="entry name" value="GTP-bd_ortho_bundle_sf"/>
</dbReference>
<dbReference type="InterPro" id="IPR027417">
    <property type="entry name" value="P-loop_NTPase"/>
</dbReference>
<dbReference type="InterPro" id="IPR050755">
    <property type="entry name" value="TRAFAC_YlqF/YawG_RiboMat"/>
</dbReference>
<dbReference type="PANTHER" id="PTHR11089">
    <property type="entry name" value="GTP-BINDING PROTEIN-RELATED"/>
    <property type="match status" value="1"/>
</dbReference>
<dbReference type="PANTHER" id="PTHR11089:SF30">
    <property type="entry name" value="GUANINE NUCLEOTIDE-BINDING PROTEIN-LIKE 3 HOMOLOG"/>
    <property type="match status" value="1"/>
</dbReference>
<dbReference type="Pfam" id="PF08701">
    <property type="entry name" value="GN3L_Grn1"/>
    <property type="match status" value="1"/>
</dbReference>
<dbReference type="Pfam" id="PF01926">
    <property type="entry name" value="MMR_HSR1"/>
    <property type="match status" value="1"/>
</dbReference>
<dbReference type="PRINTS" id="PR00326">
    <property type="entry name" value="GTP1OBG"/>
</dbReference>
<dbReference type="SUPFAM" id="SSF52540">
    <property type="entry name" value="P-loop containing nucleoside triphosphate hydrolases"/>
    <property type="match status" value="1"/>
</dbReference>
<dbReference type="PROSITE" id="PS51721">
    <property type="entry name" value="G_CP"/>
    <property type="match status" value="1"/>
</dbReference>
<comment type="function">
    <text evidence="5">Required for optimal growth. Required for normal processing of ribosomal pre-rRNA. Required for nuclear export of ribosomal protein rpl2501.</text>
</comment>
<comment type="subcellular location">
    <subcellularLocation>
        <location evidence="5 6">Nucleus</location>
        <location evidence="5 6">Nucleolus</location>
    </subcellularLocation>
</comment>
<comment type="domain">
    <text evidence="1">In contrast to other GTP-binding proteins, this family is characterized by a circular permutation of the GTPase motifs described by a G4-G1-G3 pattern.</text>
</comment>
<comment type="disruption phenotype">
    <text evidence="5">20-40% of cells exhibit morphogenetic aberrations represented by irregular, uneven, or overdeposition of septum material as well as septation and cell separation defects, often resulting in pseudofilamentous or multiseptated cells, suggesting a failure of cytokinesis in those cells. Cultures of null mutant cells did not appear to exhibit a growth arrest.</text>
</comment>
<comment type="similarity">
    <text evidence="3">Belongs to the TRAFAC class YlqF/YawG GTPase family.</text>
</comment>
<evidence type="ECO:0000250" key="1">
    <source>
        <dbReference type="UniProtKB" id="P40010"/>
    </source>
</evidence>
<evidence type="ECO:0000255" key="2"/>
<evidence type="ECO:0000255" key="3">
    <source>
        <dbReference type="PROSITE-ProRule" id="PRU01058"/>
    </source>
</evidence>
<evidence type="ECO:0000256" key="4">
    <source>
        <dbReference type="SAM" id="MobiDB-lite"/>
    </source>
</evidence>
<evidence type="ECO:0000269" key="5">
    <source>
    </source>
</evidence>
<evidence type="ECO:0000269" key="6">
    <source>
    </source>
</evidence>
<evidence type="ECO:0000303" key="7">
    <source>
    </source>
</evidence>
<evidence type="ECO:0000305" key="8"/>
<evidence type="ECO:0000312" key="9">
    <source>
        <dbReference type="EMBL" id="CAA21100.1"/>
    </source>
</evidence>
<evidence type="ECO:0007829" key="10">
    <source>
        <dbReference type="PDB" id="8ETC"/>
    </source>
</evidence>
<evidence type="ECO:0007829" key="11">
    <source>
        <dbReference type="PDB" id="8ETJ"/>
    </source>
</evidence>
<name>GRN1_SCHPO</name>
<protein>
    <recommendedName>
        <fullName evidence="9">GTPase grn1</fullName>
    </recommendedName>
    <alternativeName>
        <fullName evidence="7">GTPase in ribosomal export from the nucleolus protein 1</fullName>
    </alternativeName>
    <alternativeName>
        <fullName evidence="1">Nuclear GTP-binding protein grn1</fullName>
    </alternativeName>
</protein>
<sequence>MVSLKKKSKRRTTRLRSRIEKKAAESKRKQKRADKKNPQWKSRIPKDPGIPNSFPYKDKILAEIEEQKRIREEEKLARRASGQVDAAMEEEDAVDENGSLMISKIAEAAQASNPDDEEEFVMEEDNLGEAPLLVDSESYEASVKADTSRKAYDKEFKKVVEASDVILYVLDARDPEGTRSKDVERQVLASSAEEKRLIFVINKIDLVPSEVLNKWVTYLRNFFPTIPMRSASGSGNSNLKHQSASASSTISNLLKSLKSYSAKKKLKSSLTVGVIGYPNVGKSSVINALVNRSANGRSAPCPAGNVAGMTTSLREVKLDNKLRLVDSPGIVFPSSDSKDDLYRLVMLNAVSSTKVDDPVAVASYILQFLSRVPGQLERMFQRYELPPLLNTSDIDTATDFLVNIARKRGRLGRGGIPNLNAAANIVINDWHAGRIEWWAEPEVINEKNSSEVQDTQIVTEWAKEFDLNDF</sequence>
<organism>
    <name type="scientific">Schizosaccharomyces pombe (strain 972 / ATCC 24843)</name>
    <name type="common">Fission yeast</name>
    <dbReference type="NCBI Taxonomy" id="284812"/>
    <lineage>
        <taxon>Eukaryota</taxon>
        <taxon>Fungi</taxon>
        <taxon>Dikarya</taxon>
        <taxon>Ascomycota</taxon>
        <taxon>Taphrinomycotina</taxon>
        <taxon>Schizosaccharomycetes</taxon>
        <taxon>Schizosaccharomycetales</taxon>
        <taxon>Schizosaccharomycetaceae</taxon>
        <taxon>Schizosaccharomyces</taxon>
    </lineage>
</organism>